<sequence>MAKVLYVKANPKNNEESRTFRISEHFINEYKKAHPEDEIIELDLYKENIHFLSKEEINTIMSKDKSNLKDHPVLKYTYQFAEADKYVIATPMWNLSIPAILKAYFDYITVTGITFKYTENGAVGLLKNKKAVVIMSTGGEYLTPPFDQWNFASTYVTTMFKFFGVEDVSLIAAQRLDIIGEDVEKRVSDAMKEAEQLAKQF</sequence>
<protein>
    <recommendedName>
        <fullName evidence="1">FMN-dependent NADH:quinone oxidoreductase</fullName>
        <ecNumber evidence="1">1.6.5.-</ecNumber>
    </recommendedName>
    <alternativeName>
        <fullName evidence="1">Azo-dye reductase</fullName>
    </alternativeName>
    <alternativeName>
        <fullName evidence="1">FMN-dependent NADH-azo compound oxidoreductase</fullName>
    </alternativeName>
    <alternativeName>
        <fullName evidence="1">FMN-dependent NADH-azoreductase</fullName>
        <ecNumber evidence="1">1.7.1.17</ecNumber>
    </alternativeName>
</protein>
<feature type="chain" id="PRO_1000138972" description="FMN-dependent NADH:quinone oxidoreductase">
    <location>
        <begin position="1"/>
        <end position="201"/>
    </location>
</feature>
<feature type="binding site" evidence="1">
    <location>
        <begin position="92"/>
        <end position="95"/>
    </location>
    <ligand>
        <name>FMN</name>
        <dbReference type="ChEBI" id="CHEBI:58210"/>
    </ligand>
</feature>
<feature type="binding site" evidence="1">
    <location>
        <begin position="136"/>
        <end position="139"/>
    </location>
    <ligand>
        <name>FMN</name>
        <dbReference type="ChEBI" id="CHEBI:58210"/>
    </ligand>
</feature>
<name>AZOR_COPPD</name>
<gene>
    <name evidence="1" type="primary">azoR</name>
    <name type="ordered locus">COPRO5265_1481</name>
</gene>
<evidence type="ECO:0000255" key="1">
    <source>
        <dbReference type="HAMAP-Rule" id="MF_01216"/>
    </source>
</evidence>
<comment type="function">
    <text evidence="1">Quinone reductase that provides resistance to thiol-specific stress caused by electrophilic quinones.</text>
</comment>
<comment type="function">
    <text evidence="1">Also exhibits azoreductase activity. Catalyzes the reductive cleavage of the azo bond in aromatic azo compounds to the corresponding amines.</text>
</comment>
<comment type="catalytic activity">
    <reaction evidence="1">
        <text>2 a quinone + NADH + H(+) = 2 a 1,4-benzosemiquinone + NAD(+)</text>
        <dbReference type="Rhea" id="RHEA:65952"/>
        <dbReference type="ChEBI" id="CHEBI:15378"/>
        <dbReference type="ChEBI" id="CHEBI:57540"/>
        <dbReference type="ChEBI" id="CHEBI:57945"/>
        <dbReference type="ChEBI" id="CHEBI:132124"/>
        <dbReference type="ChEBI" id="CHEBI:134225"/>
    </reaction>
</comment>
<comment type="catalytic activity">
    <reaction evidence="1">
        <text>N,N-dimethyl-1,4-phenylenediamine + anthranilate + 2 NAD(+) = 2-(4-dimethylaminophenyl)diazenylbenzoate + 2 NADH + 2 H(+)</text>
        <dbReference type="Rhea" id="RHEA:55872"/>
        <dbReference type="ChEBI" id="CHEBI:15378"/>
        <dbReference type="ChEBI" id="CHEBI:15783"/>
        <dbReference type="ChEBI" id="CHEBI:16567"/>
        <dbReference type="ChEBI" id="CHEBI:57540"/>
        <dbReference type="ChEBI" id="CHEBI:57945"/>
        <dbReference type="ChEBI" id="CHEBI:71579"/>
        <dbReference type="EC" id="1.7.1.17"/>
    </reaction>
</comment>
<comment type="cofactor">
    <cofactor evidence="1">
        <name>FMN</name>
        <dbReference type="ChEBI" id="CHEBI:58210"/>
    </cofactor>
    <text evidence="1">Binds 1 FMN per subunit.</text>
</comment>
<comment type="subunit">
    <text evidence="1">Homodimer.</text>
</comment>
<comment type="similarity">
    <text evidence="1">Belongs to the azoreductase type 1 family.</text>
</comment>
<reference key="1">
    <citation type="submission" date="2008-08" db="EMBL/GenBank/DDBJ databases">
        <title>The complete genome sequence of Coprothermobacter proteolyticus strain ATCC 5245 / DSM 5265 / BT.</title>
        <authorList>
            <person name="Dodson R.J."/>
            <person name="Durkin A.S."/>
            <person name="Wu M."/>
            <person name="Eisen J."/>
            <person name="Sutton G."/>
        </authorList>
    </citation>
    <scope>NUCLEOTIDE SEQUENCE [LARGE SCALE GENOMIC DNA]</scope>
    <source>
        <strain>ATCC 35245 / DSM 5265 / OCM 4 / BT</strain>
    </source>
</reference>
<proteinExistence type="inferred from homology"/>
<dbReference type="EC" id="1.6.5.-" evidence="1"/>
<dbReference type="EC" id="1.7.1.17" evidence="1"/>
<dbReference type="EMBL" id="CP001145">
    <property type="protein sequence ID" value="ACI17053.1"/>
    <property type="molecule type" value="Genomic_DNA"/>
</dbReference>
<dbReference type="RefSeq" id="WP_012543705.1">
    <property type="nucleotide sequence ID" value="NC_011295.1"/>
</dbReference>
<dbReference type="SMR" id="B5Y659"/>
<dbReference type="STRING" id="309798.COPRO5265_1481"/>
<dbReference type="KEGG" id="cpo:COPRO5265_1481"/>
<dbReference type="eggNOG" id="COG1182">
    <property type="taxonomic scope" value="Bacteria"/>
</dbReference>
<dbReference type="HOGENOM" id="CLU_088964_3_1_9"/>
<dbReference type="OrthoDB" id="9787136at2"/>
<dbReference type="Proteomes" id="UP000001732">
    <property type="component" value="Chromosome"/>
</dbReference>
<dbReference type="GO" id="GO:0009055">
    <property type="term" value="F:electron transfer activity"/>
    <property type="evidence" value="ECO:0007669"/>
    <property type="project" value="UniProtKB-UniRule"/>
</dbReference>
<dbReference type="GO" id="GO:0010181">
    <property type="term" value="F:FMN binding"/>
    <property type="evidence" value="ECO:0007669"/>
    <property type="project" value="UniProtKB-UniRule"/>
</dbReference>
<dbReference type="GO" id="GO:0016652">
    <property type="term" value="F:oxidoreductase activity, acting on NAD(P)H as acceptor"/>
    <property type="evidence" value="ECO:0007669"/>
    <property type="project" value="UniProtKB-UniRule"/>
</dbReference>
<dbReference type="GO" id="GO:0016655">
    <property type="term" value="F:oxidoreductase activity, acting on NAD(P)H, quinone or similar compound as acceptor"/>
    <property type="evidence" value="ECO:0007669"/>
    <property type="project" value="InterPro"/>
</dbReference>
<dbReference type="Gene3D" id="3.40.50.360">
    <property type="match status" value="1"/>
</dbReference>
<dbReference type="HAMAP" id="MF_01216">
    <property type="entry name" value="Azoreductase_type1"/>
    <property type="match status" value="1"/>
</dbReference>
<dbReference type="InterPro" id="IPR003680">
    <property type="entry name" value="Flavodoxin_fold"/>
</dbReference>
<dbReference type="InterPro" id="IPR029039">
    <property type="entry name" value="Flavoprotein-like_sf"/>
</dbReference>
<dbReference type="InterPro" id="IPR050104">
    <property type="entry name" value="FMN-dep_NADH:Q_OxRdtase_AzoR1"/>
</dbReference>
<dbReference type="InterPro" id="IPR023048">
    <property type="entry name" value="NADH:quinone_OxRdtase_FMN_depd"/>
</dbReference>
<dbReference type="PANTHER" id="PTHR43741">
    <property type="entry name" value="FMN-DEPENDENT NADH-AZOREDUCTASE 1"/>
    <property type="match status" value="1"/>
</dbReference>
<dbReference type="PANTHER" id="PTHR43741:SF4">
    <property type="entry name" value="FMN-DEPENDENT NADH:QUINONE OXIDOREDUCTASE"/>
    <property type="match status" value="1"/>
</dbReference>
<dbReference type="Pfam" id="PF02525">
    <property type="entry name" value="Flavodoxin_2"/>
    <property type="match status" value="1"/>
</dbReference>
<dbReference type="SUPFAM" id="SSF52218">
    <property type="entry name" value="Flavoproteins"/>
    <property type="match status" value="1"/>
</dbReference>
<accession>B5Y659</accession>
<organism>
    <name type="scientific">Coprothermobacter proteolyticus (strain ATCC 35245 / DSM 5265 / OCM 4 / BT)</name>
    <dbReference type="NCBI Taxonomy" id="309798"/>
    <lineage>
        <taxon>Bacteria</taxon>
        <taxon>Pseudomonadati</taxon>
        <taxon>Coprothermobacterota</taxon>
        <taxon>Coprothermobacteria</taxon>
        <taxon>Coprothermobacterales</taxon>
        <taxon>Coprothermobacteraceae</taxon>
        <taxon>Coprothermobacter</taxon>
    </lineage>
</organism>
<keyword id="KW-0285">Flavoprotein</keyword>
<keyword id="KW-0288">FMN</keyword>
<keyword id="KW-0520">NAD</keyword>
<keyword id="KW-0560">Oxidoreductase</keyword>
<keyword id="KW-1185">Reference proteome</keyword>